<sequence length="102" mass="11498">MVTEIRSLKQLEEIFSAKKNVIVDFWAAWCGPCKLTSPEFQKAADEFSDAQFVKVNVDDHTDIAAAYNITSLPTIVVFENGVEKKRAIGFMPKTKIIDLFNN</sequence>
<organism>
    <name type="scientific">Mycoplasma genitalium (strain ATCC 33530 / DSM 19775 / NCTC 10195 / G37)</name>
    <name type="common">Mycoplasmoides genitalium</name>
    <dbReference type="NCBI Taxonomy" id="243273"/>
    <lineage>
        <taxon>Bacteria</taxon>
        <taxon>Bacillati</taxon>
        <taxon>Mycoplasmatota</taxon>
        <taxon>Mycoplasmoidales</taxon>
        <taxon>Mycoplasmoidaceae</taxon>
        <taxon>Mycoplasmoides</taxon>
    </lineage>
</organism>
<comment type="function">
    <text evidence="1">Participates in various redox reactions through the reversible oxidation of its active center dithiol to a disulfide and catalyzes dithiol-disulfide exchange reactions.</text>
</comment>
<comment type="similarity">
    <text evidence="3">Belongs to the thioredoxin family.</text>
</comment>
<comment type="sequence caution" evidence="3">
    <conflict type="erroneous initiation">
        <sequence resource="EMBL-CDS" id="AAD12321"/>
    </conflict>
</comment>
<protein>
    <recommendedName>
        <fullName>Thioredoxin</fullName>
        <shortName>Trx</shortName>
    </recommendedName>
</protein>
<reference key="1">
    <citation type="journal article" date="1995" name="Science">
        <title>The minimal gene complement of Mycoplasma genitalium.</title>
        <authorList>
            <person name="Fraser C.M."/>
            <person name="Gocayne J.D."/>
            <person name="White O."/>
            <person name="Adams M.D."/>
            <person name="Clayton R.A."/>
            <person name="Fleischmann R.D."/>
            <person name="Bult C.J."/>
            <person name="Kerlavage A.R."/>
            <person name="Sutton G.G."/>
            <person name="Kelley J.M."/>
            <person name="Fritchman J.L."/>
            <person name="Weidman J.F."/>
            <person name="Small K.V."/>
            <person name="Sandusky M."/>
            <person name="Fuhrmann J.L."/>
            <person name="Nguyen D.T."/>
            <person name="Utterback T.R."/>
            <person name="Saudek D.M."/>
            <person name="Phillips C.A."/>
            <person name="Merrick J.M."/>
            <person name="Tomb J.-F."/>
            <person name="Dougherty B.A."/>
            <person name="Bott K.F."/>
            <person name="Hu P.-C."/>
            <person name="Lucier T.S."/>
            <person name="Peterson S.N."/>
            <person name="Smith H.O."/>
            <person name="Hutchison C.A. III"/>
            <person name="Venter J.C."/>
        </authorList>
    </citation>
    <scope>NUCLEOTIDE SEQUENCE [LARGE SCALE GENOMIC DNA]</scope>
    <source>
        <strain>ATCC 33530 / DSM 19775 / NCTC 10195 / G37</strain>
    </source>
</reference>
<reference key="2">
    <citation type="journal article" date="1993" name="J. Bacteriol.">
        <title>A survey of the Mycoplasma genitalium genome by using random sequencing.</title>
        <authorList>
            <person name="Peterson S.N."/>
            <person name="Hu P.-C."/>
            <person name="Bott K.F."/>
            <person name="Hutchison C.A. III"/>
        </authorList>
    </citation>
    <scope>NUCLEOTIDE SEQUENCE [GENOMIC DNA] OF 1-21</scope>
    <source>
        <strain>ATCC 33530 / DSM 19775 / NCTC 10195 / G37</strain>
    </source>
</reference>
<gene>
    <name type="primary">trxA</name>
    <name type="synonym">trx</name>
    <name type="ordered locus">MG124</name>
</gene>
<accession>P47370</accession>
<accession>Q49453</accession>
<evidence type="ECO:0000250" key="1"/>
<evidence type="ECO:0000255" key="2">
    <source>
        <dbReference type="PROSITE-ProRule" id="PRU00691"/>
    </source>
</evidence>
<evidence type="ECO:0000305" key="3"/>
<keyword id="KW-1015">Disulfide bond</keyword>
<keyword id="KW-0249">Electron transport</keyword>
<keyword id="KW-0676">Redox-active center</keyword>
<keyword id="KW-1185">Reference proteome</keyword>
<keyword id="KW-0813">Transport</keyword>
<name>THIO_MYCGE</name>
<dbReference type="EMBL" id="L43967">
    <property type="protein sequence ID" value="AAC71342.1"/>
    <property type="molecule type" value="Genomic_DNA"/>
</dbReference>
<dbReference type="EMBL" id="U01796">
    <property type="protein sequence ID" value="AAD12321.1"/>
    <property type="status" value="ALT_INIT"/>
    <property type="molecule type" value="Genomic_DNA"/>
</dbReference>
<dbReference type="PIR" id="G64213">
    <property type="entry name" value="G64213"/>
</dbReference>
<dbReference type="RefSeq" id="WP_010869343.1">
    <property type="nucleotide sequence ID" value="NC_000908.2"/>
</dbReference>
<dbReference type="SMR" id="P47370"/>
<dbReference type="FunCoup" id="P47370">
    <property type="interactions" value="159"/>
</dbReference>
<dbReference type="STRING" id="243273.MG_124"/>
<dbReference type="GeneID" id="88282248"/>
<dbReference type="KEGG" id="mge:MG_124"/>
<dbReference type="eggNOG" id="COG0526">
    <property type="taxonomic scope" value="Bacteria"/>
</dbReference>
<dbReference type="HOGENOM" id="CLU_090389_14_0_14"/>
<dbReference type="InParanoid" id="P47370"/>
<dbReference type="OrthoDB" id="9790390at2"/>
<dbReference type="BioCyc" id="MGEN243273:G1GJ2-137-MONOMER"/>
<dbReference type="Proteomes" id="UP000000807">
    <property type="component" value="Chromosome"/>
</dbReference>
<dbReference type="GO" id="GO:0015035">
    <property type="term" value="F:protein-disulfide reductase activity"/>
    <property type="evidence" value="ECO:0007669"/>
    <property type="project" value="InterPro"/>
</dbReference>
<dbReference type="GO" id="GO:0045454">
    <property type="term" value="P:cell redox homeostasis"/>
    <property type="evidence" value="ECO:0000318"/>
    <property type="project" value="GO_Central"/>
</dbReference>
<dbReference type="CDD" id="cd02947">
    <property type="entry name" value="TRX_family"/>
    <property type="match status" value="1"/>
</dbReference>
<dbReference type="Gene3D" id="3.40.30.10">
    <property type="entry name" value="Glutaredoxin"/>
    <property type="match status" value="1"/>
</dbReference>
<dbReference type="InterPro" id="IPR005746">
    <property type="entry name" value="Thioredoxin"/>
</dbReference>
<dbReference type="InterPro" id="IPR036249">
    <property type="entry name" value="Thioredoxin-like_sf"/>
</dbReference>
<dbReference type="InterPro" id="IPR017937">
    <property type="entry name" value="Thioredoxin_CS"/>
</dbReference>
<dbReference type="InterPro" id="IPR013766">
    <property type="entry name" value="Thioredoxin_domain"/>
</dbReference>
<dbReference type="NCBIfam" id="TIGR01068">
    <property type="entry name" value="thioredoxin"/>
    <property type="match status" value="1"/>
</dbReference>
<dbReference type="PANTHER" id="PTHR45663">
    <property type="entry name" value="GEO12009P1"/>
    <property type="match status" value="1"/>
</dbReference>
<dbReference type="PANTHER" id="PTHR45663:SF11">
    <property type="entry name" value="GEO12009P1"/>
    <property type="match status" value="1"/>
</dbReference>
<dbReference type="Pfam" id="PF00085">
    <property type="entry name" value="Thioredoxin"/>
    <property type="match status" value="1"/>
</dbReference>
<dbReference type="PIRSF" id="PIRSF000077">
    <property type="entry name" value="Thioredoxin"/>
    <property type="match status" value="1"/>
</dbReference>
<dbReference type="PRINTS" id="PR00421">
    <property type="entry name" value="THIOREDOXIN"/>
</dbReference>
<dbReference type="SUPFAM" id="SSF52833">
    <property type="entry name" value="Thioredoxin-like"/>
    <property type="match status" value="1"/>
</dbReference>
<dbReference type="PROSITE" id="PS00194">
    <property type="entry name" value="THIOREDOXIN_1"/>
    <property type="match status" value="1"/>
</dbReference>
<dbReference type="PROSITE" id="PS51352">
    <property type="entry name" value="THIOREDOXIN_2"/>
    <property type="match status" value="1"/>
</dbReference>
<feature type="chain" id="PRO_0000120113" description="Thioredoxin">
    <location>
        <begin position="1"/>
        <end position="102"/>
    </location>
</feature>
<feature type="domain" description="Thioredoxin" evidence="2">
    <location>
        <begin position="2"/>
        <end position="102"/>
    </location>
</feature>
<feature type="disulfide bond" description="Redox-active" evidence="2">
    <location>
        <begin position="30"/>
        <end position="33"/>
    </location>
</feature>
<proteinExistence type="inferred from homology"/>